<gene>
    <name type="ordered locus">Mpe_A2695</name>
</gene>
<accession>A2SJB0</accession>
<dbReference type="EMBL" id="CP000555">
    <property type="protein sequence ID" value="ABM95649.1"/>
    <property type="molecule type" value="Genomic_DNA"/>
</dbReference>
<dbReference type="SMR" id="A2SJB0"/>
<dbReference type="STRING" id="420662.Mpe_A2695"/>
<dbReference type="KEGG" id="mpt:Mpe_A2695"/>
<dbReference type="eggNOG" id="COG2003">
    <property type="taxonomic scope" value="Bacteria"/>
</dbReference>
<dbReference type="HOGENOM" id="CLU_073529_0_1_4"/>
<dbReference type="Proteomes" id="UP000000366">
    <property type="component" value="Chromosome"/>
</dbReference>
<dbReference type="GO" id="GO:0046872">
    <property type="term" value="F:metal ion binding"/>
    <property type="evidence" value="ECO:0007669"/>
    <property type="project" value="UniProtKB-KW"/>
</dbReference>
<dbReference type="GO" id="GO:0008237">
    <property type="term" value="F:metallopeptidase activity"/>
    <property type="evidence" value="ECO:0007669"/>
    <property type="project" value="UniProtKB-KW"/>
</dbReference>
<dbReference type="GO" id="GO:0006508">
    <property type="term" value="P:proteolysis"/>
    <property type="evidence" value="ECO:0007669"/>
    <property type="project" value="UniProtKB-KW"/>
</dbReference>
<dbReference type="CDD" id="cd08071">
    <property type="entry name" value="MPN_DUF2466"/>
    <property type="match status" value="1"/>
</dbReference>
<dbReference type="Gene3D" id="3.40.140.10">
    <property type="entry name" value="Cytidine Deaminase, domain 2"/>
    <property type="match status" value="1"/>
</dbReference>
<dbReference type="InterPro" id="IPR037518">
    <property type="entry name" value="MPN"/>
</dbReference>
<dbReference type="InterPro" id="IPR025657">
    <property type="entry name" value="RadC_JAB"/>
</dbReference>
<dbReference type="InterPro" id="IPR010994">
    <property type="entry name" value="RuvA_2-like"/>
</dbReference>
<dbReference type="InterPro" id="IPR001405">
    <property type="entry name" value="UPF0758"/>
</dbReference>
<dbReference type="InterPro" id="IPR020891">
    <property type="entry name" value="UPF0758_CS"/>
</dbReference>
<dbReference type="InterPro" id="IPR046778">
    <property type="entry name" value="UPF0758_N"/>
</dbReference>
<dbReference type="NCBIfam" id="NF000642">
    <property type="entry name" value="PRK00024.1"/>
    <property type="match status" value="1"/>
</dbReference>
<dbReference type="NCBIfam" id="TIGR00608">
    <property type="entry name" value="radc"/>
    <property type="match status" value="1"/>
</dbReference>
<dbReference type="PANTHER" id="PTHR30471">
    <property type="entry name" value="DNA REPAIR PROTEIN RADC"/>
    <property type="match status" value="1"/>
</dbReference>
<dbReference type="PANTHER" id="PTHR30471:SF3">
    <property type="entry name" value="UPF0758 PROTEIN YEES-RELATED"/>
    <property type="match status" value="1"/>
</dbReference>
<dbReference type="Pfam" id="PF04002">
    <property type="entry name" value="RadC"/>
    <property type="match status" value="1"/>
</dbReference>
<dbReference type="Pfam" id="PF20582">
    <property type="entry name" value="UPF0758_N"/>
    <property type="match status" value="1"/>
</dbReference>
<dbReference type="SUPFAM" id="SSF102712">
    <property type="entry name" value="JAB1/MPN domain"/>
    <property type="match status" value="1"/>
</dbReference>
<dbReference type="SUPFAM" id="SSF47781">
    <property type="entry name" value="RuvA domain 2-like"/>
    <property type="match status" value="1"/>
</dbReference>
<dbReference type="PROSITE" id="PS50249">
    <property type="entry name" value="MPN"/>
    <property type="match status" value="1"/>
</dbReference>
<dbReference type="PROSITE" id="PS01302">
    <property type="entry name" value="UPF0758"/>
    <property type="match status" value="1"/>
</dbReference>
<organism>
    <name type="scientific">Methylibium petroleiphilum (strain ATCC BAA-1232 / LMG 22953 / PM1)</name>
    <dbReference type="NCBI Taxonomy" id="420662"/>
    <lineage>
        <taxon>Bacteria</taxon>
        <taxon>Pseudomonadati</taxon>
        <taxon>Pseudomonadota</taxon>
        <taxon>Betaproteobacteria</taxon>
        <taxon>Burkholderiales</taxon>
        <taxon>Sphaerotilaceae</taxon>
        <taxon>Methylibium</taxon>
    </lineage>
</organism>
<sequence length="222" mass="23671">MKDLPADLRPREKLLARGPAALADAELLALLLRTGLKGQGVLQLAQALLDRFGGLSGLLATDTAELGSVKGLGPAKRAELAAVLEIARRSLASRLAQTPVFDSPQAVKDYLQLQLASKPHEVFAVLFLDTQHRLLAFEELFRGTLNQASVYPREVVKRALALNAAAAILAHNHPSGVAEPSRADEALTQALKAALALVDVRVLDHFVVARGSVVSFAERGLL</sequence>
<evidence type="ECO:0000255" key="1">
    <source>
        <dbReference type="PROSITE-ProRule" id="PRU01182"/>
    </source>
</evidence>
<evidence type="ECO:0000305" key="2"/>
<proteinExistence type="inferred from homology"/>
<protein>
    <recommendedName>
        <fullName>UPF0758 protein Mpe_A2695</fullName>
    </recommendedName>
</protein>
<comment type="similarity">
    <text evidence="2">Belongs to the UPF0758 family.</text>
</comment>
<keyword id="KW-0378">Hydrolase</keyword>
<keyword id="KW-0479">Metal-binding</keyword>
<keyword id="KW-0482">Metalloprotease</keyword>
<keyword id="KW-0645">Protease</keyword>
<keyword id="KW-1185">Reference proteome</keyword>
<keyword id="KW-0862">Zinc</keyword>
<name>Y2695_METPP</name>
<reference key="1">
    <citation type="journal article" date="2007" name="J. Bacteriol.">
        <title>Whole-genome analysis of the methyl tert-butyl ether-degrading beta-proteobacterium Methylibium petroleiphilum PM1.</title>
        <authorList>
            <person name="Kane S.R."/>
            <person name="Chakicherla A.Y."/>
            <person name="Chain P.S.G."/>
            <person name="Schmidt R."/>
            <person name="Shin M.W."/>
            <person name="Legler T.C."/>
            <person name="Scow K.M."/>
            <person name="Larimer F.W."/>
            <person name="Lucas S.M."/>
            <person name="Richardson P.M."/>
            <person name="Hristova K.R."/>
        </authorList>
    </citation>
    <scope>NUCLEOTIDE SEQUENCE [LARGE SCALE GENOMIC DNA]</scope>
    <source>
        <strain>ATCC BAA-1232 / LMG 22953 / PM1</strain>
    </source>
</reference>
<feature type="chain" id="PRO_0000322692" description="UPF0758 protein Mpe_A2695">
    <location>
        <begin position="1"/>
        <end position="222"/>
    </location>
</feature>
<feature type="domain" description="MPN" evidence="1">
    <location>
        <begin position="100"/>
        <end position="222"/>
    </location>
</feature>
<feature type="short sequence motif" description="JAMM motif" evidence="1">
    <location>
        <begin position="171"/>
        <end position="184"/>
    </location>
</feature>
<feature type="binding site" evidence="1">
    <location>
        <position position="171"/>
    </location>
    <ligand>
        <name>Zn(2+)</name>
        <dbReference type="ChEBI" id="CHEBI:29105"/>
        <note>catalytic</note>
    </ligand>
</feature>
<feature type="binding site" evidence="1">
    <location>
        <position position="173"/>
    </location>
    <ligand>
        <name>Zn(2+)</name>
        <dbReference type="ChEBI" id="CHEBI:29105"/>
        <note>catalytic</note>
    </ligand>
</feature>
<feature type="binding site" evidence="1">
    <location>
        <position position="184"/>
    </location>
    <ligand>
        <name>Zn(2+)</name>
        <dbReference type="ChEBI" id="CHEBI:29105"/>
        <note>catalytic</note>
    </ligand>
</feature>